<accession>P53748</accession>
<accession>D6W1N7</accession>
<proteinExistence type="evidence at protein level"/>
<dbReference type="EMBL" id="Z71677">
    <property type="protein sequence ID" value="CAA96344.1"/>
    <property type="molecule type" value="Genomic_DNA"/>
</dbReference>
<dbReference type="EMBL" id="BK006947">
    <property type="protein sequence ID" value="DAA10603.1"/>
    <property type="molecule type" value="Genomic_DNA"/>
</dbReference>
<dbReference type="PIR" id="S63394">
    <property type="entry name" value="S63394"/>
</dbReference>
<dbReference type="BioGRID" id="35888">
    <property type="interactions" value="18"/>
</dbReference>
<dbReference type="FunCoup" id="P53748">
    <property type="interactions" value="15"/>
</dbReference>
<dbReference type="IntAct" id="P53748">
    <property type="interactions" value="2"/>
</dbReference>
<dbReference type="MINT" id="P53748"/>
<dbReference type="STRING" id="4932.YNR062C"/>
<dbReference type="PaxDb" id="4932-YNR062C"/>
<dbReference type="EnsemblFungi" id="YNR062C_mRNA">
    <property type="protein sequence ID" value="YNR062C"/>
    <property type="gene ID" value="YNR062C"/>
</dbReference>
<dbReference type="KEGG" id="sce:YNR062C"/>
<dbReference type="AGR" id="SGD:S000005345"/>
<dbReference type="SGD" id="S000005345">
    <property type="gene designation" value="YNR062C"/>
</dbReference>
<dbReference type="VEuPathDB" id="FungiDB:YNR062C"/>
<dbReference type="eggNOG" id="ENOG502R1WK">
    <property type="taxonomic scope" value="Eukaryota"/>
</dbReference>
<dbReference type="HOGENOM" id="CLU_047735_0_0_1"/>
<dbReference type="InParanoid" id="P53748"/>
<dbReference type="OMA" id="QAFMIGA"/>
<dbReference type="OrthoDB" id="2549326at2759"/>
<dbReference type="BioCyc" id="YEAST:G3O-33366-MONOMER"/>
<dbReference type="BioGRID-ORCS" id="855799">
    <property type="hits" value="0 hits in 10 CRISPR screens"/>
</dbReference>
<dbReference type="PRO" id="PR:P53748"/>
<dbReference type="Proteomes" id="UP000002311">
    <property type="component" value="Chromosome XIV"/>
</dbReference>
<dbReference type="RNAct" id="P53748">
    <property type="molecule type" value="protein"/>
</dbReference>
<dbReference type="GO" id="GO:0005783">
    <property type="term" value="C:endoplasmic reticulum"/>
    <property type="evidence" value="ECO:0007005"/>
    <property type="project" value="SGD"/>
</dbReference>
<dbReference type="GO" id="GO:0016020">
    <property type="term" value="C:membrane"/>
    <property type="evidence" value="ECO:0007669"/>
    <property type="project" value="UniProtKB-SubCell"/>
</dbReference>
<dbReference type="Gene3D" id="1.20.1250.20">
    <property type="entry name" value="MFS general substrate transporter like domains"/>
    <property type="match status" value="1"/>
</dbReference>
<dbReference type="InterPro" id="IPR036259">
    <property type="entry name" value="MFS_trans_sf"/>
</dbReference>
<dbReference type="SUPFAM" id="SSF103473">
    <property type="entry name" value="MFS general substrate transporter"/>
    <property type="match status" value="1"/>
</dbReference>
<sequence length="327" mass="35659">MSIAQDRGIVFKLLSIYRAAAGIFMALAQLIVIFFGYCDFKIKGYRIASYNAPTFASSFIILAVCLLLVVVLENPEVKVTNSENSLFSALKQFFRVERKKLISCLILLWSMFLSSFIMSEVVYFMPLFLTLHVNWDTKFQGIAFMVASILGVTGSYFAPKLINVGCSCGRAKDGGLEESDTTGSETVEVKKKDSLYSGQVFLSIFALFVSLLGQAFMIGASEALKHKSMPPTNSGIFFSAGMSITLLGYNFLASSIPALFSMYIDPKLKVQLMPSIGAISGIGKLVAPIVLAALYGTRLGLSIAVGFGMILVAVSIPPLIWLRKKRC</sequence>
<feature type="chain" id="PRO_0000203482" description="Uncharacterized membrane protein YNR062C">
    <location>
        <begin position="1"/>
        <end position="327"/>
    </location>
</feature>
<feature type="topological domain" description="Cytoplasmic" evidence="1">
    <location>
        <begin position="1"/>
        <end position="19"/>
    </location>
</feature>
<feature type="transmembrane region" description="Helical" evidence="1">
    <location>
        <begin position="20"/>
        <end position="40"/>
    </location>
</feature>
<feature type="topological domain" description="Extracellular" evidence="1">
    <location>
        <begin position="41"/>
        <end position="51"/>
    </location>
</feature>
<feature type="transmembrane region" description="Helical" evidence="1">
    <location>
        <begin position="52"/>
        <end position="72"/>
    </location>
</feature>
<feature type="topological domain" description="Cytoplasmic" evidence="1">
    <location>
        <begin position="73"/>
        <end position="104"/>
    </location>
</feature>
<feature type="transmembrane region" description="Helical" evidence="1">
    <location>
        <begin position="105"/>
        <end position="125"/>
    </location>
</feature>
<feature type="topological domain" description="Extracellular" evidence="1">
    <location>
        <begin position="126"/>
        <end position="141"/>
    </location>
</feature>
<feature type="transmembrane region" description="Helical" evidence="1">
    <location>
        <begin position="142"/>
        <end position="162"/>
    </location>
</feature>
<feature type="topological domain" description="Cytoplasmic" evidence="1">
    <location>
        <begin position="163"/>
        <end position="199"/>
    </location>
</feature>
<feature type="transmembrane region" description="Helical" evidence="1">
    <location>
        <begin position="200"/>
        <end position="220"/>
    </location>
</feature>
<feature type="topological domain" description="Extracellular" evidence="1">
    <location>
        <begin position="221"/>
        <end position="235"/>
    </location>
</feature>
<feature type="transmembrane region" description="Helical" evidence="1">
    <location>
        <begin position="236"/>
        <end position="256"/>
    </location>
</feature>
<feature type="topological domain" description="Cytoplasmic" evidence="1">
    <location>
        <begin position="257"/>
        <end position="275"/>
    </location>
</feature>
<feature type="transmembrane region" description="Helical" evidence="1">
    <location>
        <begin position="276"/>
        <end position="296"/>
    </location>
</feature>
<feature type="topological domain" description="Extracellular" evidence="1">
    <location>
        <begin position="297"/>
        <end position="300"/>
    </location>
</feature>
<feature type="transmembrane region" description="Helical" evidence="1">
    <location>
        <begin position="301"/>
        <end position="321"/>
    </location>
</feature>
<feature type="topological domain" description="Cytoplasmic" evidence="1">
    <location>
        <begin position="322"/>
        <end position="327"/>
    </location>
</feature>
<comment type="subcellular location">
    <subcellularLocation>
        <location>Membrane</location>
        <topology>Multi-pass membrane protein</topology>
    </subcellularLocation>
</comment>
<organism>
    <name type="scientific">Saccharomyces cerevisiae (strain ATCC 204508 / S288c)</name>
    <name type="common">Baker's yeast</name>
    <dbReference type="NCBI Taxonomy" id="559292"/>
    <lineage>
        <taxon>Eukaryota</taxon>
        <taxon>Fungi</taxon>
        <taxon>Dikarya</taxon>
        <taxon>Ascomycota</taxon>
        <taxon>Saccharomycotina</taxon>
        <taxon>Saccharomycetes</taxon>
        <taxon>Saccharomycetales</taxon>
        <taxon>Saccharomycetaceae</taxon>
        <taxon>Saccharomyces</taxon>
    </lineage>
</organism>
<name>YN91_YEAST</name>
<reference key="1">
    <citation type="journal article" date="1997" name="Nature">
        <title>The nucleotide sequence of Saccharomyces cerevisiae chromosome XIV and its evolutionary implications.</title>
        <authorList>
            <person name="Philippsen P."/>
            <person name="Kleine K."/>
            <person name="Poehlmann R."/>
            <person name="Duesterhoeft A."/>
            <person name="Hamberg K."/>
            <person name="Hegemann J.H."/>
            <person name="Obermaier B."/>
            <person name="Urrestarazu L.A."/>
            <person name="Aert R."/>
            <person name="Albermann K."/>
            <person name="Altmann R."/>
            <person name="Andre B."/>
            <person name="Baladron V."/>
            <person name="Ballesta J.P.G."/>
            <person name="Becam A.-M."/>
            <person name="Beinhauer J.D."/>
            <person name="Boskovic J."/>
            <person name="Buitrago M.J."/>
            <person name="Bussereau F."/>
            <person name="Coster F."/>
            <person name="Crouzet M."/>
            <person name="D'Angelo M."/>
            <person name="Dal Pero F."/>
            <person name="De Antoni A."/>
            <person name="del Rey F."/>
            <person name="Doignon F."/>
            <person name="Domdey H."/>
            <person name="Dubois E."/>
            <person name="Fiedler T.A."/>
            <person name="Fleig U."/>
            <person name="Floeth M."/>
            <person name="Fritz C."/>
            <person name="Gaillardin C."/>
            <person name="Garcia-Cantalejo J.M."/>
            <person name="Glansdorff N."/>
            <person name="Goffeau A."/>
            <person name="Gueldener U."/>
            <person name="Herbert C.J."/>
            <person name="Heumann K."/>
            <person name="Heuss-Neitzel D."/>
            <person name="Hilbert H."/>
            <person name="Hinni K."/>
            <person name="Iraqui Houssaini I."/>
            <person name="Jacquet M."/>
            <person name="Jimenez A."/>
            <person name="Jonniaux J.-L."/>
            <person name="Karpfinger-Hartl L."/>
            <person name="Lanfranchi G."/>
            <person name="Lepingle A."/>
            <person name="Levesque H."/>
            <person name="Lyck R."/>
            <person name="Maftahi M."/>
            <person name="Mallet L."/>
            <person name="Maurer C.T.C."/>
            <person name="Messenguy F."/>
            <person name="Mewes H.-W."/>
            <person name="Moestl D."/>
            <person name="Nasr F."/>
            <person name="Nicaud J.-M."/>
            <person name="Niedenthal R.K."/>
            <person name="Pandolfo D."/>
            <person name="Pierard A."/>
            <person name="Piravandi E."/>
            <person name="Planta R.J."/>
            <person name="Pohl T.M."/>
            <person name="Purnelle B."/>
            <person name="Rebischung C."/>
            <person name="Remacha M.A."/>
            <person name="Revuelta J.L."/>
            <person name="Rinke M."/>
            <person name="Saiz J.E."/>
            <person name="Sartorello F."/>
            <person name="Scherens B."/>
            <person name="Sen-Gupta M."/>
            <person name="Soler-Mira A."/>
            <person name="Urbanus J.H.M."/>
            <person name="Valle G."/>
            <person name="Van Dyck L."/>
            <person name="Verhasselt P."/>
            <person name="Vierendeels F."/>
            <person name="Vissers S."/>
            <person name="Voet M."/>
            <person name="Volckaert G."/>
            <person name="Wach A."/>
            <person name="Wambutt R."/>
            <person name="Wedler H."/>
            <person name="Zollner A."/>
            <person name="Hani J."/>
        </authorList>
    </citation>
    <scope>NUCLEOTIDE SEQUENCE [LARGE SCALE GENOMIC DNA]</scope>
    <source>
        <strain>ATCC 204508 / S288c</strain>
    </source>
</reference>
<reference key="2">
    <citation type="journal article" date="2014" name="G3 (Bethesda)">
        <title>The reference genome sequence of Saccharomyces cerevisiae: Then and now.</title>
        <authorList>
            <person name="Engel S.R."/>
            <person name="Dietrich F.S."/>
            <person name="Fisk D.G."/>
            <person name="Binkley G."/>
            <person name="Balakrishnan R."/>
            <person name="Costanzo M.C."/>
            <person name="Dwight S.S."/>
            <person name="Hitz B.C."/>
            <person name="Karra K."/>
            <person name="Nash R.S."/>
            <person name="Weng S."/>
            <person name="Wong E.D."/>
            <person name="Lloyd P."/>
            <person name="Skrzypek M.S."/>
            <person name="Miyasato S.R."/>
            <person name="Simison M."/>
            <person name="Cherry J.M."/>
        </authorList>
    </citation>
    <scope>GENOME REANNOTATION</scope>
    <source>
        <strain>ATCC 204508 / S288c</strain>
    </source>
</reference>
<reference key="3">
    <citation type="journal article" date="2006" name="Proc. Natl. Acad. Sci. U.S.A.">
        <title>A global topology map of the Saccharomyces cerevisiae membrane proteome.</title>
        <authorList>
            <person name="Kim H."/>
            <person name="Melen K."/>
            <person name="Oesterberg M."/>
            <person name="von Heijne G."/>
        </authorList>
    </citation>
    <scope>TOPOLOGY [LARGE SCALE ANALYSIS]</scope>
    <source>
        <strain>ATCC 208353 / W303-1A</strain>
    </source>
</reference>
<protein>
    <recommendedName>
        <fullName>Uncharacterized membrane protein YNR062C</fullName>
    </recommendedName>
</protein>
<evidence type="ECO:0000255" key="1"/>
<gene>
    <name type="ordered locus">YNR062C</name>
    <name type="ORF">N3527</name>
</gene>
<keyword id="KW-0472">Membrane</keyword>
<keyword id="KW-1185">Reference proteome</keyword>
<keyword id="KW-0812">Transmembrane</keyword>
<keyword id="KW-1133">Transmembrane helix</keyword>